<dbReference type="EMBL" id="AM042561">
    <property type="protein sequence ID" value="CAJ14853.1"/>
    <property type="molecule type" value="Genomic_DNA"/>
</dbReference>
<dbReference type="EMBL" id="AM042562">
    <property type="protein sequence ID" value="CAJ14854.1"/>
    <property type="molecule type" value="Genomic_DNA"/>
</dbReference>
<dbReference type="GO" id="GO:0009507">
    <property type="term" value="C:chloroplast"/>
    <property type="evidence" value="ECO:0007669"/>
    <property type="project" value="UniProtKB-SubCell"/>
</dbReference>
<dbReference type="GO" id="GO:0003723">
    <property type="term" value="F:RNA binding"/>
    <property type="evidence" value="ECO:0007669"/>
    <property type="project" value="UniProtKB-KW"/>
</dbReference>
<dbReference type="GO" id="GO:0006397">
    <property type="term" value="P:mRNA processing"/>
    <property type="evidence" value="ECO:0007669"/>
    <property type="project" value="UniProtKB-KW"/>
</dbReference>
<dbReference type="GO" id="GO:0008380">
    <property type="term" value="P:RNA splicing"/>
    <property type="evidence" value="ECO:0007669"/>
    <property type="project" value="UniProtKB-UniRule"/>
</dbReference>
<dbReference type="GO" id="GO:0008033">
    <property type="term" value="P:tRNA processing"/>
    <property type="evidence" value="ECO:0007669"/>
    <property type="project" value="UniProtKB-KW"/>
</dbReference>
<dbReference type="HAMAP" id="MF_01390">
    <property type="entry name" value="MatK"/>
    <property type="match status" value="1"/>
</dbReference>
<dbReference type="InterPro" id="IPR024937">
    <property type="entry name" value="Domain_X"/>
</dbReference>
<dbReference type="InterPro" id="IPR002866">
    <property type="entry name" value="Maturase_MatK"/>
</dbReference>
<dbReference type="InterPro" id="IPR024942">
    <property type="entry name" value="Maturase_MatK_N"/>
</dbReference>
<dbReference type="PANTHER" id="PTHR34811">
    <property type="entry name" value="MATURASE K"/>
    <property type="match status" value="1"/>
</dbReference>
<dbReference type="PANTHER" id="PTHR34811:SF1">
    <property type="entry name" value="MATURASE K"/>
    <property type="match status" value="1"/>
</dbReference>
<dbReference type="Pfam" id="PF01348">
    <property type="entry name" value="Intron_maturas2"/>
    <property type="match status" value="1"/>
</dbReference>
<dbReference type="Pfam" id="PF01824">
    <property type="entry name" value="MatK_N"/>
    <property type="match status" value="1"/>
</dbReference>
<organism>
    <name type="scientific">Malus domestica</name>
    <name type="common">Apple</name>
    <name type="synonym">Pyrus malus</name>
    <dbReference type="NCBI Taxonomy" id="3750"/>
    <lineage>
        <taxon>Eukaryota</taxon>
        <taxon>Viridiplantae</taxon>
        <taxon>Streptophyta</taxon>
        <taxon>Embryophyta</taxon>
        <taxon>Tracheophyta</taxon>
        <taxon>Spermatophyta</taxon>
        <taxon>Magnoliopsida</taxon>
        <taxon>eudicotyledons</taxon>
        <taxon>Gunneridae</taxon>
        <taxon>Pentapetalae</taxon>
        <taxon>rosids</taxon>
        <taxon>fabids</taxon>
        <taxon>Rosales</taxon>
        <taxon>Rosaceae</taxon>
        <taxon>Amygdaloideae</taxon>
        <taxon>Maleae</taxon>
        <taxon>Malus</taxon>
    </lineage>
</organism>
<protein>
    <recommendedName>
        <fullName evidence="1">Maturase K</fullName>
    </recommendedName>
    <alternativeName>
        <fullName evidence="1">Intron maturase</fullName>
    </alternativeName>
</protein>
<accession>Q4LAM6</accession>
<accession>Q4LAM7</accession>
<sequence length="485" mass="57552">MEEFQGYLELDRYQQHDFLYPLIFREYIYALAHDHGLNRSILLDNVGYDTKYSLLIIKRLISRMYQQNHLIISANDSNQNKFFGYNKNLYSQMMSEGFAVIVEIPFSRRLVSSLEATEIVKSYNLRSIHSIFPFLEDKFPHLNYVSDVLIPYPIHLEILVQTLRYWVKDPSSLHLLRLFLHEYSNWNSLITPKKIIFSKSNPRLFLLLYNSHVCEYESILLFLRNQSSHLRLTSSGIFFERIHFYEKKKDPVEEVFVNDFPAAILWFFKDPFMHYVRYQGKSILSSKDTPLLMNKWKYYLVNLWQCHSYVWSQPGRIYINQLSKHSLDFLGYFSSMRPNLSVVRGQMLENSFIMDNAMKKLDTLVPIIPLIGSLAKVKFCNALGHPISKSTWADSSDFDIIDRFLHICRNLSHYYSGSSRKKSLYRIKYILRLSCVKTLARKHKSTVRTFLKRLGYKIIGRILYGRRTDSFFNLPKSFLYFEEVL</sequence>
<proteinExistence type="inferred from homology"/>
<keyword id="KW-0150">Chloroplast</keyword>
<keyword id="KW-0507">mRNA processing</keyword>
<keyword id="KW-0934">Plastid</keyword>
<keyword id="KW-0694">RNA-binding</keyword>
<keyword id="KW-0819">tRNA processing</keyword>
<gene>
    <name evidence="1" type="primary">matK</name>
</gene>
<feature type="chain" id="PRO_0000143503" description="Maturase K">
    <location>
        <begin position="1"/>
        <end position="485"/>
    </location>
</feature>
<feature type="sequence variant" description="In strain: cv. Elstar.">
    <original>R</original>
    <variation>L</variation>
    <location>
        <position position="108"/>
    </location>
</feature>
<feature type="sequence variant" description="In strain: cv. Elstar.">
    <original>P</original>
    <variation>S</variation>
    <location>
        <position position="338"/>
    </location>
</feature>
<comment type="function">
    <text evidence="1">Usually encoded in the trnK tRNA gene intron. Probably assists in splicing its own and other chloroplast group II introns.</text>
</comment>
<comment type="subcellular location">
    <subcellularLocation>
        <location>Plastid</location>
        <location>Chloroplast</location>
    </subcellularLocation>
</comment>
<comment type="similarity">
    <text evidence="1">Belongs to the intron maturase 2 family. MatK subfamily.</text>
</comment>
<reference key="1">
    <citation type="thesis" date="2003" institute="University of Gent" country="Belgium">
        <title>Molecular contributions to the conservation of forest genetic resources in Flanders: genetic diversity of Malus sylvestris, Quercus spp. and Carpinus betulus.</title>
        <authorList>
            <person name="Coart E."/>
        </authorList>
    </citation>
    <scope>NUCLEOTIDE SEQUENCE [GENOMIC DNA]</scope>
    <source>
        <strain>cv. Elstar</strain>
        <strain>cv. Reinette de France</strain>
        <tissue>Leaf</tissue>
    </source>
</reference>
<geneLocation type="chloroplast"/>
<evidence type="ECO:0000255" key="1">
    <source>
        <dbReference type="HAMAP-Rule" id="MF_01390"/>
    </source>
</evidence>
<name>MATK_MALDO</name>